<comment type="similarity">
    <text evidence="1">Belongs to the bacterial ribosomal protein bL27 family.</text>
</comment>
<protein>
    <recommendedName>
        <fullName evidence="1">Large ribosomal subunit protein bL27</fullName>
    </recommendedName>
    <alternativeName>
        <fullName evidence="3">50S ribosomal protein L27</fullName>
    </alternativeName>
</protein>
<proteinExistence type="inferred from homology"/>
<organism>
    <name type="scientific">Beutenbergia cavernae (strain ATCC BAA-8 / DSM 12333 / CCUG 43141 / JCM 11478 / NBRC 16432 / NCIMB 13614 / HKI 0122)</name>
    <dbReference type="NCBI Taxonomy" id="471853"/>
    <lineage>
        <taxon>Bacteria</taxon>
        <taxon>Bacillati</taxon>
        <taxon>Actinomycetota</taxon>
        <taxon>Actinomycetes</taxon>
        <taxon>Micrococcales</taxon>
        <taxon>Beutenbergiaceae</taxon>
        <taxon>Beutenbergia</taxon>
    </lineage>
</organism>
<gene>
    <name evidence="1" type="primary">rpmA</name>
    <name type="ordered locus">Bcav_1623</name>
</gene>
<reference key="1">
    <citation type="journal article" date="2009" name="Stand. Genomic Sci.">
        <title>Complete genome sequence of Beutenbergia cavernae type strain (HKI 0122).</title>
        <authorList>
            <person name="Land M."/>
            <person name="Pukall R."/>
            <person name="Abt B."/>
            <person name="Goker M."/>
            <person name="Rohde M."/>
            <person name="Glavina Del Rio T."/>
            <person name="Tice H."/>
            <person name="Copeland A."/>
            <person name="Cheng J.F."/>
            <person name="Lucas S."/>
            <person name="Chen F."/>
            <person name="Nolan M."/>
            <person name="Bruce D."/>
            <person name="Goodwin L."/>
            <person name="Pitluck S."/>
            <person name="Ivanova N."/>
            <person name="Mavromatis K."/>
            <person name="Ovchinnikova G."/>
            <person name="Pati A."/>
            <person name="Chen A."/>
            <person name="Palaniappan K."/>
            <person name="Hauser L."/>
            <person name="Chang Y.J."/>
            <person name="Jefferies C.C."/>
            <person name="Saunders E."/>
            <person name="Brettin T."/>
            <person name="Detter J.C."/>
            <person name="Han C."/>
            <person name="Chain P."/>
            <person name="Bristow J."/>
            <person name="Eisen J.A."/>
            <person name="Markowitz V."/>
            <person name="Hugenholtz P."/>
            <person name="Kyrpides N.C."/>
            <person name="Klenk H.P."/>
            <person name="Lapidus A."/>
        </authorList>
    </citation>
    <scope>NUCLEOTIDE SEQUENCE [LARGE SCALE GENOMIC DNA]</scope>
    <source>
        <strain>ATCC BAA-8 / DSM 12333 / CCUG 43141 / JCM 11478 / NBRC 16432 / NCIMB 13614 / HKI 0122</strain>
    </source>
</reference>
<name>RL27_BEUC1</name>
<keyword id="KW-1185">Reference proteome</keyword>
<keyword id="KW-0687">Ribonucleoprotein</keyword>
<keyword id="KW-0689">Ribosomal protein</keyword>
<accession>C5C3W6</accession>
<dbReference type="EMBL" id="CP001618">
    <property type="protein sequence ID" value="ACQ79879.1"/>
    <property type="molecule type" value="Genomic_DNA"/>
</dbReference>
<dbReference type="RefSeq" id="WP_015882119.1">
    <property type="nucleotide sequence ID" value="NC_012669.1"/>
</dbReference>
<dbReference type="SMR" id="C5C3W6"/>
<dbReference type="STRING" id="471853.Bcav_1623"/>
<dbReference type="KEGG" id="bcv:Bcav_1623"/>
<dbReference type="eggNOG" id="COG0211">
    <property type="taxonomic scope" value="Bacteria"/>
</dbReference>
<dbReference type="HOGENOM" id="CLU_095424_4_0_11"/>
<dbReference type="OrthoDB" id="9803474at2"/>
<dbReference type="Proteomes" id="UP000007962">
    <property type="component" value="Chromosome"/>
</dbReference>
<dbReference type="GO" id="GO:0022625">
    <property type="term" value="C:cytosolic large ribosomal subunit"/>
    <property type="evidence" value="ECO:0007669"/>
    <property type="project" value="TreeGrafter"/>
</dbReference>
<dbReference type="GO" id="GO:0003735">
    <property type="term" value="F:structural constituent of ribosome"/>
    <property type="evidence" value="ECO:0007669"/>
    <property type="project" value="InterPro"/>
</dbReference>
<dbReference type="GO" id="GO:0006412">
    <property type="term" value="P:translation"/>
    <property type="evidence" value="ECO:0007669"/>
    <property type="project" value="UniProtKB-UniRule"/>
</dbReference>
<dbReference type="FunFam" id="2.40.50.100:FF:000020">
    <property type="entry name" value="50S ribosomal protein L27"/>
    <property type="match status" value="1"/>
</dbReference>
<dbReference type="Gene3D" id="2.40.50.100">
    <property type="match status" value="1"/>
</dbReference>
<dbReference type="HAMAP" id="MF_00539">
    <property type="entry name" value="Ribosomal_bL27"/>
    <property type="match status" value="1"/>
</dbReference>
<dbReference type="InterPro" id="IPR001684">
    <property type="entry name" value="Ribosomal_bL27"/>
</dbReference>
<dbReference type="InterPro" id="IPR018261">
    <property type="entry name" value="Ribosomal_bL27_CS"/>
</dbReference>
<dbReference type="NCBIfam" id="TIGR00062">
    <property type="entry name" value="L27"/>
    <property type="match status" value="1"/>
</dbReference>
<dbReference type="PANTHER" id="PTHR15893:SF0">
    <property type="entry name" value="LARGE RIBOSOMAL SUBUNIT PROTEIN BL27M"/>
    <property type="match status" value="1"/>
</dbReference>
<dbReference type="PANTHER" id="PTHR15893">
    <property type="entry name" value="RIBOSOMAL PROTEIN L27"/>
    <property type="match status" value="1"/>
</dbReference>
<dbReference type="Pfam" id="PF01016">
    <property type="entry name" value="Ribosomal_L27"/>
    <property type="match status" value="1"/>
</dbReference>
<dbReference type="PRINTS" id="PR00063">
    <property type="entry name" value="RIBOSOMALL27"/>
</dbReference>
<dbReference type="SUPFAM" id="SSF110324">
    <property type="entry name" value="Ribosomal L27 protein-like"/>
    <property type="match status" value="1"/>
</dbReference>
<dbReference type="PROSITE" id="PS00831">
    <property type="entry name" value="RIBOSOMAL_L27"/>
    <property type="match status" value="1"/>
</dbReference>
<feature type="chain" id="PRO_1000211918" description="Large ribosomal subunit protein bL27">
    <location>
        <begin position="1"/>
        <end position="85"/>
    </location>
</feature>
<feature type="region of interest" description="Disordered" evidence="2">
    <location>
        <begin position="1"/>
        <end position="21"/>
    </location>
</feature>
<feature type="compositionally biased region" description="Polar residues" evidence="2">
    <location>
        <begin position="7"/>
        <end position="19"/>
    </location>
</feature>
<evidence type="ECO:0000255" key="1">
    <source>
        <dbReference type="HAMAP-Rule" id="MF_00539"/>
    </source>
</evidence>
<evidence type="ECO:0000256" key="2">
    <source>
        <dbReference type="SAM" id="MobiDB-lite"/>
    </source>
</evidence>
<evidence type="ECO:0000305" key="3"/>
<sequence>MAHKKGASSSRNGRDSNAQRLGVKRFGGQVVKAGEIIVRQRGTHFHPGDGVGRGKDDTLFALQPGSVQFGTRRGRKVIDVVSVDA</sequence>